<keyword id="KW-0025">Alternative splicing</keyword>
<keyword id="KW-1003">Cell membrane</keyword>
<keyword id="KW-0141">cGMP biosynthesis</keyword>
<keyword id="KW-1015">Disulfide bond</keyword>
<keyword id="KW-0325">Glycoprotein</keyword>
<keyword id="KW-0342">GTP-binding</keyword>
<keyword id="KW-0456">Lyase</keyword>
<keyword id="KW-0472">Membrane</keyword>
<keyword id="KW-0547">Nucleotide-binding</keyword>
<keyword id="KW-0892">Osteogenesis</keyword>
<keyword id="KW-0597">Phosphoprotein</keyword>
<keyword id="KW-0675">Receptor</keyword>
<keyword id="KW-1185">Reference proteome</keyword>
<keyword id="KW-0732">Signal</keyword>
<keyword id="KW-0812">Transmembrane</keyword>
<keyword id="KW-1133">Transmembrane helix</keyword>
<gene>
    <name type="primary">Npr2</name>
</gene>
<protein>
    <recommendedName>
        <fullName>Atrial natriuretic peptide receptor 2</fullName>
        <ecNumber evidence="4">4.6.1.2</ecNumber>
    </recommendedName>
    <alternativeName>
        <fullName>Atrial natriuretic peptide receptor type B</fullName>
        <shortName>ANP-B</shortName>
        <shortName>ANPR-B</shortName>
        <shortName>NPR-B</shortName>
    </alternativeName>
    <alternativeName>
        <fullName>Guanylate cyclase B</fullName>
        <shortName>GC-B</shortName>
    </alternativeName>
</protein>
<evidence type="ECO:0000250" key="1"/>
<evidence type="ECO:0000250" key="2">
    <source>
        <dbReference type="UniProtKB" id="P16066"/>
    </source>
</evidence>
<evidence type="ECO:0000250" key="3">
    <source>
        <dbReference type="UniProtKB" id="P16067"/>
    </source>
</evidence>
<evidence type="ECO:0000250" key="4">
    <source>
        <dbReference type="UniProtKB" id="P20594"/>
    </source>
</evidence>
<evidence type="ECO:0000255" key="5"/>
<evidence type="ECO:0000255" key="6">
    <source>
        <dbReference type="PROSITE-ProRule" id="PRU00099"/>
    </source>
</evidence>
<evidence type="ECO:0000255" key="7">
    <source>
        <dbReference type="PROSITE-ProRule" id="PRU00159"/>
    </source>
</evidence>
<evidence type="ECO:0000269" key="8">
    <source>
    </source>
</evidence>
<evidence type="ECO:0000305" key="9"/>
<name>ANPRB_MOUSE</name>
<comment type="function">
    <text evidence="8">Receptor for the C-type natriuretic peptide NPPC/CNP hormone. Has guanylate cyclase activity upon binding of its ligand. May play a role in the regulation of skeletal growth.</text>
</comment>
<comment type="catalytic activity">
    <reaction evidence="4">
        <text>GTP = 3',5'-cyclic GMP + diphosphate</text>
        <dbReference type="Rhea" id="RHEA:13665"/>
        <dbReference type="ChEBI" id="CHEBI:33019"/>
        <dbReference type="ChEBI" id="CHEBI:37565"/>
        <dbReference type="ChEBI" id="CHEBI:57746"/>
        <dbReference type="EC" id="4.6.1.2"/>
    </reaction>
</comment>
<comment type="subcellular location">
    <subcellularLocation>
        <location evidence="4">Cell membrane</location>
        <topology evidence="4">Single-pass type I membrane protein</topology>
    </subcellularLocation>
</comment>
<comment type="alternative products">
    <event type="alternative splicing"/>
    <isoform>
        <id>Q6VVW5-1</id>
        <name>1</name>
        <name>GC-B1</name>
        <sequence type="displayed"/>
    </isoform>
    <isoform>
        <id>Q6VVW5-2</id>
        <name>2</name>
        <name>GC-B2</name>
        <sequence type="described" ref="VSP_013583"/>
    </isoform>
    <isoform>
        <id>Q6VVW5-3</id>
        <name>3</name>
        <name>GC-B3</name>
        <sequence type="described" ref="VSP_013584 VSP_013585"/>
    </isoform>
</comment>
<comment type="tissue specificity">
    <text evidence="8">Widely expressed. Expressed in the columnar proliferating and prehypertrophic chondrocyte layers of the tibia.</text>
</comment>
<comment type="PTM">
    <text evidence="3">Phosphorylated. Phosphorylation of the protein kinase-like domain is required for full activation by CNP.</text>
</comment>
<comment type="PTM">
    <text evidence="4">Glycosylated.</text>
</comment>
<comment type="disruption phenotype">
    <text evidence="8">Mice mainly display dwarfism associated with impairment of endochondral ossification, reduced growth of longitudinal vertebra and limb-bone. Self-clasping and priapism that could be due to neuronal disorder are detected. The development of the female reproductive organ is affected.</text>
</comment>
<comment type="miscellaneous">
    <molecule>Isoform 2</molecule>
    <text evidence="9">Binds ligand, but no cyclase activation.</text>
</comment>
<comment type="miscellaneous">
    <molecule>Isoform 3</molecule>
    <text evidence="9">Fail to bind the ligand.</text>
</comment>
<comment type="similarity">
    <text evidence="6">Belongs to the adenylyl cyclase class-4/guanylyl cyclase family.</text>
</comment>
<reference key="1">
    <citation type="journal article" date="2003" name="J. Biol. Chem.">
        <title>Regulation of the guanylyl cyclase-B receptor by alternative splicing.</title>
        <authorList>
            <person name="Tamura N."/>
            <person name="Garbers D.L."/>
        </authorList>
    </citation>
    <scope>NUCLEOTIDE SEQUENCE [GENOMIC DNA]</scope>
    <scope>ALTERNATIVE SPLICING</scope>
    <source>
        <strain>129S6/SvEvTac</strain>
        <tissue>Spleen</tissue>
    </source>
</reference>
<reference key="2">
    <citation type="journal article" date="2009" name="PLoS Biol.">
        <title>Lineage-specific biology revealed by a finished genome assembly of the mouse.</title>
        <authorList>
            <person name="Church D.M."/>
            <person name="Goodstadt L."/>
            <person name="Hillier L.W."/>
            <person name="Zody M.C."/>
            <person name="Goldstein S."/>
            <person name="She X."/>
            <person name="Bult C.J."/>
            <person name="Agarwala R."/>
            <person name="Cherry J.L."/>
            <person name="DiCuccio M."/>
            <person name="Hlavina W."/>
            <person name="Kapustin Y."/>
            <person name="Meric P."/>
            <person name="Maglott D."/>
            <person name="Birtle Z."/>
            <person name="Marques A.C."/>
            <person name="Graves T."/>
            <person name="Zhou S."/>
            <person name="Teague B."/>
            <person name="Potamousis K."/>
            <person name="Churas C."/>
            <person name="Place M."/>
            <person name="Herschleb J."/>
            <person name="Runnheim R."/>
            <person name="Forrest D."/>
            <person name="Amos-Landgraf J."/>
            <person name="Schwartz D.C."/>
            <person name="Cheng Z."/>
            <person name="Lindblad-Toh K."/>
            <person name="Eichler E.E."/>
            <person name="Ponting C.P."/>
        </authorList>
    </citation>
    <scope>NUCLEOTIDE SEQUENCE [LARGE SCALE GENOMIC DNA]</scope>
    <source>
        <strain>C57BL/6J</strain>
    </source>
</reference>
<reference key="3">
    <citation type="submission" date="2005-07" db="EMBL/GenBank/DDBJ databases">
        <authorList>
            <person name="Mural R.J."/>
            <person name="Adams M.D."/>
            <person name="Myers E.W."/>
            <person name="Smith H.O."/>
            <person name="Venter J.C."/>
        </authorList>
    </citation>
    <scope>NUCLEOTIDE SEQUENCE [LARGE SCALE GENOMIC DNA]</scope>
</reference>
<reference key="4">
    <citation type="journal article" date="2004" name="Genome Res.">
        <title>The status, quality, and expansion of the NIH full-length cDNA project: the Mammalian Gene Collection (MGC).</title>
        <authorList>
            <consortium name="The MGC Project Team"/>
        </authorList>
    </citation>
    <scope>NUCLEOTIDE SEQUENCE [LARGE SCALE MRNA] (ISOFORM 1)</scope>
    <source>
        <strain>FVB/N</strain>
        <tissue>Liver</tissue>
    </source>
</reference>
<reference key="5">
    <citation type="journal article" date="2004" name="Proc. Natl. Acad. Sci. U.S.A.">
        <title>Critical roles of the guanylyl cyclase B receptor in endochondral ossification and development of female reproductive organs.</title>
        <authorList>
            <person name="Tamura N."/>
            <person name="Doolittle L.K."/>
            <person name="Hammer R.E."/>
            <person name="Shelton J.M."/>
            <person name="Richardson J.A."/>
            <person name="Garbers D.L."/>
        </authorList>
    </citation>
    <scope>FUNCTION</scope>
    <scope>DISRUPTION PHENOTYPE</scope>
    <scope>TISSUE SPECIFICITY</scope>
</reference>
<reference key="6">
    <citation type="journal article" date="2010" name="Cell">
        <title>A tissue-specific atlas of mouse protein phosphorylation and expression.</title>
        <authorList>
            <person name="Huttlin E.L."/>
            <person name="Jedrychowski M.P."/>
            <person name="Elias J.E."/>
            <person name="Goswami T."/>
            <person name="Rad R."/>
            <person name="Beausoleil S.A."/>
            <person name="Villen J."/>
            <person name="Haas W."/>
            <person name="Sowa M.E."/>
            <person name="Gygi S.P."/>
        </authorList>
    </citation>
    <scope>IDENTIFICATION BY MASS SPECTROMETRY [LARGE SCALE ANALYSIS]</scope>
    <source>
        <tissue>Heart</tissue>
        <tissue>Lung</tissue>
    </source>
</reference>
<organism>
    <name type="scientific">Mus musculus</name>
    <name type="common">Mouse</name>
    <dbReference type="NCBI Taxonomy" id="10090"/>
    <lineage>
        <taxon>Eukaryota</taxon>
        <taxon>Metazoa</taxon>
        <taxon>Chordata</taxon>
        <taxon>Craniata</taxon>
        <taxon>Vertebrata</taxon>
        <taxon>Euteleostomi</taxon>
        <taxon>Mammalia</taxon>
        <taxon>Eutheria</taxon>
        <taxon>Euarchontoglires</taxon>
        <taxon>Glires</taxon>
        <taxon>Rodentia</taxon>
        <taxon>Myomorpha</taxon>
        <taxon>Muroidea</taxon>
        <taxon>Muridae</taxon>
        <taxon>Murinae</taxon>
        <taxon>Mus</taxon>
        <taxon>Mus</taxon>
    </lineage>
</organism>
<dbReference type="EC" id="4.6.1.2" evidence="4"/>
<dbReference type="EMBL" id="AY323833">
    <property type="protein sequence ID" value="AAQ02634.1"/>
    <property type="molecule type" value="Genomic_DNA"/>
</dbReference>
<dbReference type="EMBL" id="AY323832">
    <property type="protein sequence ID" value="AAQ02634.1"/>
    <property type="status" value="JOINED"/>
    <property type="molecule type" value="Genomic_DNA"/>
</dbReference>
<dbReference type="EMBL" id="AY323833">
    <property type="protein sequence ID" value="AAQ02635.1"/>
    <property type="molecule type" value="Genomic_DNA"/>
</dbReference>
<dbReference type="EMBL" id="AY323832">
    <property type="protein sequence ID" value="AAQ02635.1"/>
    <property type="status" value="JOINED"/>
    <property type="molecule type" value="Genomic_DNA"/>
</dbReference>
<dbReference type="EMBL" id="AY323833">
    <property type="protein sequence ID" value="AAQ02636.1"/>
    <property type="molecule type" value="Genomic_DNA"/>
</dbReference>
<dbReference type="EMBL" id="AY323832">
    <property type="protein sequence ID" value="AAQ02636.1"/>
    <property type="status" value="JOINED"/>
    <property type="molecule type" value="Genomic_DNA"/>
</dbReference>
<dbReference type="EMBL" id="AL732626">
    <property type="status" value="NOT_ANNOTATED_CDS"/>
    <property type="molecule type" value="Genomic_DNA"/>
</dbReference>
<dbReference type="EMBL" id="CH466565">
    <property type="protein sequence ID" value="EDL02456.1"/>
    <property type="molecule type" value="Genomic_DNA"/>
</dbReference>
<dbReference type="EMBL" id="BC042470">
    <property type="protein sequence ID" value="AAH42470.1"/>
    <property type="molecule type" value="mRNA"/>
</dbReference>
<dbReference type="CCDS" id="CCDS18105.1">
    <molecule id="Q6VVW5-1"/>
</dbReference>
<dbReference type="RefSeq" id="NP_001342395.1">
    <molecule id="Q6VVW5-2"/>
    <property type="nucleotide sequence ID" value="NM_001355466.1"/>
</dbReference>
<dbReference type="RefSeq" id="NP_776149.1">
    <molecule id="Q6VVW5-1"/>
    <property type="nucleotide sequence ID" value="NM_173788.4"/>
</dbReference>
<dbReference type="RefSeq" id="XP_006537896.1">
    <property type="nucleotide sequence ID" value="XM_006537833.3"/>
</dbReference>
<dbReference type="SMR" id="Q6VVW5"/>
<dbReference type="BioGRID" id="230934">
    <property type="interactions" value="4"/>
</dbReference>
<dbReference type="FunCoup" id="Q6VVW5">
    <property type="interactions" value="1157"/>
</dbReference>
<dbReference type="STRING" id="10090.ENSMUSP00000030191"/>
<dbReference type="GlyCosmos" id="Q6VVW5">
    <property type="glycosylation" value="7 sites, No reported glycans"/>
</dbReference>
<dbReference type="GlyGen" id="Q6VVW5">
    <property type="glycosylation" value="9 sites, 2 N-linked glycans (2 sites)"/>
</dbReference>
<dbReference type="iPTMnet" id="Q6VVW5"/>
<dbReference type="PhosphoSitePlus" id="Q6VVW5"/>
<dbReference type="jPOST" id="Q6VVW5"/>
<dbReference type="PaxDb" id="10090-ENSMUSP00000030191"/>
<dbReference type="PeptideAtlas" id="Q6VVW5"/>
<dbReference type="ProteomicsDB" id="282116">
    <molecule id="Q6VVW5-1"/>
</dbReference>
<dbReference type="ProteomicsDB" id="282117">
    <molecule id="Q6VVW5-2"/>
</dbReference>
<dbReference type="ProteomicsDB" id="282118">
    <molecule id="Q6VVW5-3"/>
</dbReference>
<dbReference type="Pumba" id="Q6VVW5"/>
<dbReference type="Antibodypedia" id="1647">
    <property type="antibodies" value="256 antibodies from 33 providers"/>
</dbReference>
<dbReference type="DNASU" id="230103"/>
<dbReference type="Ensembl" id="ENSMUST00000030191.15">
    <molecule id="Q6VVW5-1"/>
    <property type="protein sequence ID" value="ENSMUSP00000030191.9"/>
    <property type="gene ID" value="ENSMUSG00000028469.16"/>
</dbReference>
<dbReference type="GeneID" id="230103"/>
<dbReference type="KEGG" id="mmu:230103"/>
<dbReference type="UCSC" id="uc008sqm.1">
    <molecule id="Q6VVW5-1"/>
    <property type="organism name" value="mouse"/>
</dbReference>
<dbReference type="AGR" id="MGI:97372"/>
<dbReference type="CTD" id="4882"/>
<dbReference type="MGI" id="MGI:97372">
    <property type="gene designation" value="Npr2"/>
</dbReference>
<dbReference type="VEuPathDB" id="HostDB:ENSMUSG00000028469"/>
<dbReference type="eggNOG" id="KOG1023">
    <property type="taxonomic scope" value="Eukaryota"/>
</dbReference>
<dbReference type="GeneTree" id="ENSGT00940000156985"/>
<dbReference type="InParanoid" id="Q6VVW5"/>
<dbReference type="OMA" id="SEMDGAC"/>
<dbReference type="OrthoDB" id="1890790at2759"/>
<dbReference type="PhylomeDB" id="Q6VVW5"/>
<dbReference type="TreeFam" id="TF106338"/>
<dbReference type="Reactome" id="R-MMU-5578768">
    <property type="pathway name" value="Physiological factors"/>
</dbReference>
<dbReference type="BioGRID-ORCS" id="230103">
    <property type="hits" value="4 hits in 81 CRISPR screens"/>
</dbReference>
<dbReference type="ChiTaRS" id="Npr2">
    <property type="organism name" value="mouse"/>
</dbReference>
<dbReference type="PRO" id="PR:Q6VVW5"/>
<dbReference type="Proteomes" id="UP000000589">
    <property type="component" value="Chromosome 4"/>
</dbReference>
<dbReference type="RNAct" id="Q6VVW5">
    <property type="molecule type" value="protein"/>
</dbReference>
<dbReference type="Bgee" id="ENSMUSG00000028469">
    <property type="expression patterns" value="Expressed in retinal neural layer and 221 other cell types or tissues"/>
</dbReference>
<dbReference type="ExpressionAtlas" id="Q6VVW5">
    <property type="expression patterns" value="baseline and differential"/>
</dbReference>
<dbReference type="GO" id="GO:0005929">
    <property type="term" value="C:cilium"/>
    <property type="evidence" value="ECO:0000314"/>
    <property type="project" value="MGI"/>
</dbReference>
<dbReference type="GO" id="GO:0005737">
    <property type="term" value="C:cytoplasm"/>
    <property type="evidence" value="ECO:0000314"/>
    <property type="project" value="MGI"/>
</dbReference>
<dbReference type="GO" id="GO:0043005">
    <property type="term" value="C:neuron projection"/>
    <property type="evidence" value="ECO:0000314"/>
    <property type="project" value="MGI"/>
</dbReference>
<dbReference type="GO" id="GO:0005634">
    <property type="term" value="C:nucleus"/>
    <property type="evidence" value="ECO:0000314"/>
    <property type="project" value="MGI"/>
</dbReference>
<dbReference type="GO" id="GO:0005886">
    <property type="term" value="C:plasma membrane"/>
    <property type="evidence" value="ECO:0000250"/>
    <property type="project" value="UniProtKB"/>
</dbReference>
<dbReference type="GO" id="GO:0045202">
    <property type="term" value="C:synapse"/>
    <property type="evidence" value="ECO:0007669"/>
    <property type="project" value="GOC"/>
</dbReference>
<dbReference type="GO" id="GO:0005524">
    <property type="term" value="F:ATP binding"/>
    <property type="evidence" value="ECO:0007669"/>
    <property type="project" value="InterPro"/>
</dbReference>
<dbReference type="GO" id="GO:0005525">
    <property type="term" value="F:GTP binding"/>
    <property type="evidence" value="ECO:0007669"/>
    <property type="project" value="UniProtKB-KW"/>
</dbReference>
<dbReference type="GO" id="GO:0004383">
    <property type="term" value="F:guanylate cyclase activity"/>
    <property type="evidence" value="ECO:0000314"/>
    <property type="project" value="MGI"/>
</dbReference>
<dbReference type="GO" id="GO:0042802">
    <property type="term" value="F:identical protein binding"/>
    <property type="evidence" value="ECO:0000353"/>
    <property type="project" value="MGI"/>
</dbReference>
<dbReference type="GO" id="GO:0016941">
    <property type="term" value="F:natriuretic peptide receptor activity"/>
    <property type="evidence" value="ECO:0000314"/>
    <property type="project" value="MGI"/>
</dbReference>
<dbReference type="GO" id="GO:0017046">
    <property type="term" value="F:peptide hormone binding"/>
    <property type="evidence" value="ECO:0007669"/>
    <property type="project" value="Ensembl"/>
</dbReference>
<dbReference type="GO" id="GO:0004672">
    <property type="term" value="F:protein kinase activity"/>
    <property type="evidence" value="ECO:0007669"/>
    <property type="project" value="InterPro"/>
</dbReference>
<dbReference type="GO" id="GO:0060466">
    <property type="term" value="P:activation of meiosis involved in egg activation"/>
    <property type="evidence" value="ECO:0000315"/>
    <property type="project" value="MGI"/>
</dbReference>
<dbReference type="GO" id="GO:0007409">
    <property type="term" value="P:axonogenesis"/>
    <property type="evidence" value="ECO:0000315"/>
    <property type="project" value="MGI"/>
</dbReference>
<dbReference type="GO" id="GO:0060385">
    <property type="term" value="P:axonogenesis involved in innervation"/>
    <property type="evidence" value="ECO:0000315"/>
    <property type="project" value="MGI"/>
</dbReference>
<dbReference type="GO" id="GO:0008015">
    <property type="term" value="P:blood circulation"/>
    <property type="evidence" value="ECO:0000315"/>
    <property type="project" value="MGI"/>
</dbReference>
<dbReference type="GO" id="GO:0001568">
    <property type="term" value="P:blood vessel development"/>
    <property type="evidence" value="ECO:0000315"/>
    <property type="project" value="MGI"/>
</dbReference>
<dbReference type="GO" id="GO:0001974">
    <property type="term" value="P:blood vessel remodeling"/>
    <property type="evidence" value="ECO:0000315"/>
    <property type="project" value="MGI"/>
</dbReference>
<dbReference type="GO" id="GO:0060348">
    <property type="term" value="P:bone development"/>
    <property type="evidence" value="ECO:0000315"/>
    <property type="project" value="MGI"/>
</dbReference>
<dbReference type="GO" id="GO:0098868">
    <property type="term" value="P:bone growth"/>
    <property type="evidence" value="ECO:0000315"/>
    <property type="project" value="MGI"/>
</dbReference>
<dbReference type="GO" id="GO:0061939">
    <property type="term" value="P:c-di-GMP signaling"/>
    <property type="evidence" value="ECO:0000315"/>
    <property type="project" value="MGI"/>
</dbReference>
<dbReference type="GO" id="GO:0051216">
    <property type="term" value="P:cartilage development"/>
    <property type="evidence" value="ECO:0000315"/>
    <property type="project" value="MGI"/>
</dbReference>
<dbReference type="GO" id="GO:0071321">
    <property type="term" value="P:cellular response to cGMP"/>
    <property type="evidence" value="ECO:0000315"/>
    <property type="project" value="MGI"/>
</dbReference>
<dbReference type="GO" id="GO:0097011">
    <property type="term" value="P:cellular response to granulocyte macrophage colony-stimulating factor stimulus"/>
    <property type="evidence" value="ECO:0007669"/>
    <property type="project" value="Ensembl"/>
</dbReference>
<dbReference type="GO" id="GO:1901653">
    <property type="term" value="P:cellular response to peptide"/>
    <property type="evidence" value="ECO:0000315"/>
    <property type="project" value="MGI"/>
</dbReference>
<dbReference type="GO" id="GO:0046068">
    <property type="term" value="P:cGMP metabolic process"/>
    <property type="evidence" value="ECO:0000315"/>
    <property type="project" value="MGI"/>
</dbReference>
<dbReference type="GO" id="GO:0007268">
    <property type="term" value="P:chemical synaptic transmission"/>
    <property type="evidence" value="ECO:0000315"/>
    <property type="project" value="MGI"/>
</dbReference>
<dbReference type="GO" id="GO:0002062">
    <property type="term" value="P:chondrocyte differentiation"/>
    <property type="evidence" value="ECO:0000315"/>
    <property type="project" value="MGI"/>
</dbReference>
<dbReference type="GO" id="GO:0035988">
    <property type="term" value="P:chondrocyte proliferation"/>
    <property type="evidence" value="ECO:0000315"/>
    <property type="project" value="MGI"/>
</dbReference>
<dbReference type="GO" id="GO:0051276">
    <property type="term" value="P:chromosome organization"/>
    <property type="evidence" value="ECO:0000315"/>
    <property type="project" value="MGI"/>
</dbReference>
<dbReference type="GO" id="GO:0048668">
    <property type="term" value="P:collateral sprouting"/>
    <property type="evidence" value="ECO:0000315"/>
    <property type="project" value="MGI"/>
</dbReference>
<dbReference type="GO" id="GO:0001549">
    <property type="term" value="P:cumulus cell differentiation"/>
    <property type="evidence" value="ECO:0000315"/>
    <property type="project" value="MGI"/>
</dbReference>
<dbReference type="GO" id="GO:0048565">
    <property type="term" value="P:digestive tract development"/>
    <property type="evidence" value="ECO:0000315"/>
    <property type="project" value="MGI"/>
</dbReference>
<dbReference type="GO" id="GO:0048546">
    <property type="term" value="P:digestive tract morphogenesis"/>
    <property type="evidence" value="ECO:0000315"/>
    <property type="project" value="MGI"/>
</dbReference>
<dbReference type="GO" id="GO:0001958">
    <property type="term" value="P:endochondral ossification"/>
    <property type="evidence" value="ECO:0000315"/>
    <property type="project" value="MGI"/>
</dbReference>
<dbReference type="GO" id="GO:0007173">
    <property type="term" value="P:epidermal growth factor receptor signaling pathway"/>
    <property type="evidence" value="ECO:0000315"/>
    <property type="project" value="MGI"/>
</dbReference>
<dbReference type="GO" id="GO:0097194">
    <property type="term" value="P:execution phase of apoptosis"/>
    <property type="evidence" value="ECO:0000315"/>
    <property type="project" value="MGI"/>
</dbReference>
<dbReference type="GO" id="GO:0030540">
    <property type="term" value="P:female genitalia development"/>
    <property type="evidence" value="ECO:0000315"/>
    <property type="project" value="MGI"/>
</dbReference>
<dbReference type="GO" id="GO:0035483">
    <property type="term" value="P:gastric emptying"/>
    <property type="evidence" value="ECO:0000315"/>
    <property type="project" value="MGI"/>
</dbReference>
<dbReference type="GO" id="GO:0035112">
    <property type="term" value="P:genitalia morphogenesis"/>
    <property type="evidence" value="ECO:0000315"/>
    <property type="project" value="MGI"/>
</dbReference>
<dbReference type="GO" id="GO:0007281">
    <property type="term" value="P:germ cell development"/>
    <property type="evidence" value="ECO:0000315"/>
    <property type="project" value="MGI"/>
</dbReference>
<dbReference type="GO" id="GO:0003417">
    <property type="term" value="P:growth plate cartilage development"/>
    <property type="evidence" value="ECO:0000315"/>
    <property type="project" value="MGI"/>
</dbReference>
<dbReference type="GO" id="GO:0060173">
    <property type="term" value="P:limb development"/>
    <property type="evidence" value="ECO:0000315"/>
    <property type="project" value="MGI"/>
</dbReference>
<dbReference type="GO" id="GO:0035108">
    <property type="term" value="P:limb morphogenesis"/>
    <property type="evidence" value="ECO:0000315"/>
    <property type="project" value="MGI"/>
</dbReference>
<dbReference type="GO" id="GO:0001945">
    <property type="term" value="P:lymph vessel development"/>
    <property type="evidence" value="ECO:0000315"/>
    <property type="project" value="MGI"/>
</dbReference>
<dbReference type="GO" id="GO:0000165">
    <property type="term" value="P:MAPK cascade"/>
    <property type="evidence" value="ECO:0000315"/>
    <property type="project" value="MGI"/>
</dbReference>
<dbReference type="GO" id="GO:0051321">
    <property type="term" value="P:meiotic cell cycle"/>
    <property type="evidence" value="ECO:0000315"/>
    <property type="project" value="MGI"/>
</dbReference>
<dbReference type="GO" id="GO:1903537">
    <property type="term" value="P:meiotic cell cycle process involved in oocyte maturation"/>
    <property type="evidence" value="ECO:0000315"/>
    <property type="project" value="MGI"/>
</dbReference>
<dbReference type="GO" id="GO:0035264">
    <property type="term" value="P:multicellular organism growth"/>
    <property type="evidence" value="ECO:0000315"/>
    <property type="project" value="MGI"/>
</dbReference>
<dbReference type="GO" id="GO:0051447">
    <property type="term" value="P:negative regulation of meiotic cell cycle"/>
    <property type="evidence" value="ECO:0000315"/>
    <property type="project" value="MGI"/>
</dbReference>
<dbReference type="GO" id="GO:1900194">
    <property type="term" value="P:negative regulation of oocyte maturation"/>
    <property type="evidence" value="ECO:0000315"/>
    <property type="project" value="MGI"/>
</dbReference>
<dbReference type="GO" id="GO:0021675">
    <property type="term" value="P:nerve development"/>
    <property type="evidence" value="ECO:0000315"/>
    <property type="project" value="MGI"/>
</dbReference>
<dbReference type="GO" id="GO:0051402">
    <property type="term" value="P:neuron apoptotic process"/>
    <property type="evidence" value="ECO:0000315"/>
    <property type="project" value="MGI"/>
</dbReference>
<dbReference type="GO" id="GO:0019228">
    <property type="term" value="P:neuronal action potential"/>
    <property type="evidence" value="ECO:0000315"/>
    <property type="project" value="MGI"/>
</dbReference>
<dbReference type="GO" id="GO:0048599">
    <property type="term" value="P:oocyte development"/>
    <property type="evidence" value="ECO:0000315"/>
    <property type="project" value="MGI"/>
</dbReference>
<dbReference type="GO" id="GO:0001541">
    <property type="term" value="P:ovarian follicle development"/>
    <property type="evidence" value="ECO:0000315"/>
    <property type="project" value="MGI"/>
</dbReference>
<dbReference type="GO" id="GO:0036342">
    <property type="term" value="P:post-anal tail morphogenesis"/>
    <property type="evidence" value="ECO:0000315"/>
    <property type="project" value="MGI"/>
</dbReference>
<dbReference type="GO" id="GO:0007168">
    <property type="term" value="P:receptor guanylyl cyclase signaling pathway"/>
    <property type="evidence" value="ECO:0000250"/>
    <property type="project" value="UniProtKB"/>
</dbReference>
<dbReference type="GO" id="GO:0071774">
    <property type="term" value="P:response to fibroblast growth factor"/>
    <property type="evidence" value="ECO:0000315"/>
    <property type="project" value="MGI"/>
</dbReference>
<dbReference type="GO" id="GO:0009725">
    <property type="term" value="P:response to hormone"/>
    <property type="evidence" value="ECO:0000315"/>
    <property type="project" value="MGI"/>
</dbReference>
<dbReference type="GO" id="GO:0034699">
    <property type="term" value="P:response to luteinizing hormone"/>
    <property type="evidence" value="ECO:0000315"/>
    <property type="project" value="MGI"/>
</dbReference>
<dbReference type="GO" id="GO:1902074">
    <property type="term" value="P:response to salt"/>
    <property type="evidence" value="ECO:0000315"/>
    <property type="project" value="MGI"/>
</dbReference>
<dbReference type="GO" id="GO:0009611">
    <property type="term" value="P:response to wounding"/>
    <property type="evidence" value="ECO:0000315"/>
    <property type="project" value="MGI"/>
</dbReference>
<dbReference type="GO" id="GO:0007605">
    <property type="term" value="P:sensory perception of sound"/>
    <property type="evidence" value="ECO:0000315"/>
    <property type="project" value="MGI"/>
</dbReference>
<dbReference type="GO" id="GO:0007338">
    <property type="term" value="P:single fertilization"/>
    <property type="evidence" value="ECO:0000315"/>
    <property type="project" value="MGI"/>
</dbReference>
<dbReference type="GO" id="GO:0048745">
    <property type="term" value="P:smooth muscle tissue development"/>
    <property type="evidence" value="ECO:0000315"/>
    <property type="project" value="MGI"/>
</dbReference>
<dbReference type="GO" id="GO:0007283">
    <property type="term" value="P:spermatogenesis"/>
    <property type="evidence" value="ECO:0000315"/>
    <property type="project" value="MGI"/>
</dbReference>
<dbReference type="GO" id="GO:0001964">
    <property type="term" value="P:startle response"/>
    <property type="evidence" value="ECO:0000315"/>
    <property type="project" value="MGI"/>
</dbReference>
<dbReference type="GO" id="GO:0007033">
    <property type="term" value="P:vacuole organization"/>
    <property type="evidence" value="ECO:0000315"/>
    <property type="project" value="MGI"/>
</dbReference>
<dbReference type="GO" id="GO:0061042">
    <property type="term" value="P:vascular wound healing"/>
    <property type="evidence" value="ECO:0000315"/>
    <property type="project" value="MGI"/>
</dbReference>
<dbReference type="GO" id="GO:0001570">
    <property type="term" value="P:vasculogenesis"/>
    <property type="evidence" value="ECO:0000315"/>
    <property type="project" value="MGI"/>
</dbReference>
<dbReference type="GO" id="GO:0021562">
    <property type="term" value="P:vestibulocochlear nerve development"/>
    <property type="evidence" value="ECO:0000315"/>
    <property type="project" value="MGI"/>
</dbReference>
<dbReference type="GO" id="GO:0021647">
    <property type="term" value="P:vestibulocochlear nerve maturation"/>
    <property type="evidence" value="ECO:0000315"/>
    <property type="project" value="MGI"/>
</dbReference>
<dbReference type="GO" id="GO:0050872">
    <property type="term" value="P:white fat cell differentiation"/>
    <property type="evidence" value="ECO:0000315"/>
    <property type="project" value="MGI"/>
</dbReference>
<dbReference type="CDD" id="cd07302">
    <property type="entry name" value="CHD"/>
    <property type="match status" value="1"/>
</dbReference>
<dbReference type="CDD" id="cd06384">
    <property type="entry name" value="PBP1_NPR_B"/>
    <property type="match status" value="1"/>
</dbReference>
<dbReference type="CDD" id="cd14042">
    <property type="entry name" value="PK_GC-A_B"/>
    <property type="match status" value="1"/>
</dbReference>
<dbReference type="FunFam" id="1.10.510.10:FF:000270">
    <property type="entry name" value="Guanylate cyclase"/>
    <property type="match status" value="1"/>
</dbReference>
<dbReference type="FunFam" id="3.30.200.20:FF:001106">
    <property type="entry name" value="Guanylate cyclase"/>
    <property type="match status" value="1"/>
</dbReference>
<dbReference type="FunFam" id="3.30.70.1230:FF:000004">
    <property type="entry name" value="Guanylate cyclase"/>
    <property type="match status" value="1"/>
</dbReference>
<dbReference type="FunFam" id="3.40.50.2300:FF:000101">
    <property type="entry name" value="Guanylate cyclase"/>
    <property type="match status" value="1"/>
</dbReference>
<dbReference type="FunFam" id="3.40.50.2300:FF:000245">
    <property type="entry name" value="Guanylate cyclase"/>
    <property type="match status" value="1"/>
</dbReference>
<dbReference type="Gene3D" id="3.40.50.2300">
    <property type="match status" value="3"/>
</dbReference>
<dbReference type="Gene3D" id="3.30.70.1230">
    <property type="entry name" value="Nucleotide cyclase"/>
    <property type="match status" value="1"/>
</dbReference>
<dbReference type="Gene3D" id="1.10.510.10">
    <property type="entry name" value="Transferase(Phosphotransferase) domain 1"/>
    <property type="match status" value="1"/>
</dbReference>
<dbReference type="InterPro" id="IPR001054">
    <property type="entry name" value="A/G_cyclase"/>
</dbReference>
<dbReference type="InterPro" id="IPR018297">
    <property type="entry name" value="A/G_cyclase_CS"/>
</dbReference>
<dbReference type="InterPro" id="IPR001828">
    <property type="entry name" value="ANF_lig-bd_rcpt"/>
</dbReference>
<dbReference type="InterPro" id="IPR001170">
    <property type="entry name" value="ANPR/GUC"/>
</dbReference>
<dbReference type="InterPro" id="IPR050401">
    <property type="entry name" value="Cyclic_nucleotide_synthase"/>
</dbReference>
<dbReference type="InterPro" id="IPR011009">
    <property type="entry name" value="Kinase-like_dom_sf"/>
</dbReference>
<dbReference type="InterPro" id="IPR029787">
    <property type="entry name" value="Nucleotide_cyclase"/>
</dbReference>
<dbReference type="InterPro" id="IPR028082">
    <property type="entry name" value="Peripla_BP_I"/>
</dbReference>
<dbReference type="InterPro" id="IPR000719">
    <property type="entry name" value="Prot_kinase_dom"/>
</dbReference>
<dbReference type="InterPro" id="IPR001245">
    <property type="entry name" value="Ser-Thr/Tyr_kinase_cat_dom"/>
</dbReference>
<dbReference type="PANTHER" id="PTHR11920:SF494">
    <property type="entry name" value="ATRIAL NATRIURETIC PEPTIDE RECEPTOR 2"/>
    <property type="match status" value="1"/>
</dbReference>
<dbReference type="PANTHER" id="PTHR11920">
    <property type="entry name" value="GUANYLYL CYCLASE"/>
    <property type="match status" value="1"/>
</dbReference>
<dbReference type="Pfam" id="PF01094">
    <property type="entry name" value="ANF_receptor"/>
    <property type="match status" value="1"/>
</dbReference>
<dbReference type="Pfam" id="PF00211">
    <property type="entry name" value="Guanylate_cyc"/>
    <property type="match status" value="1"/>
</dbReference>
<dbReference type="Pfam" id="PF07714">
    <property type="entry name" value="PK_Tyr_Ser-Thr"/>
    <property type="match status" value="1"/>
</dbReference>
<dbReference type="PRINTS" id="PR00255">
    <property type="entry name" value="NATPEPTIDER"/>
</dbReference>
<dbReference type="SMART" id="SM00044">
    <property type="entry name" value="CYCc"/>
    <property type="match status" value="1"/>
</dbReference>
<dbReference type="SUPFAM" id="SSF55073">
    <property type="entry name" value="Nucleotide cyclase"/>
    <property type="match status" value="1"/>
</dbReference>
<dbReference type="SUPFAM" id="SSF53822">
    <property type="entry name" value="Periplasmic binding protein-like I"/>
    <property type="match status" value="1"/>
</dbReference>
<dbReference type="SUPFAM" id="SSF56112">
    <property type="entry name" value="Protein kinase-like (PK-like)"/>
    <property type="match status" value="1"/>
</dbReference>
<dbReference type="PROSITE" id="PS00458">
    <property type="entry name" value="ANF_RECEPTORS"/>
    <property type="match status" value="1"/>
</dbReference>
<dbReference type="PROSITE" id="PS00452">
    <property type="entry name" value="GUANYLATE_CYCLASE_1"/>
    <property type="match status" value="1"/>
</dbReference>
<dbReference type="PROSITE" id="PS50125">
    <property type="entry name" value="GUANYLATE_CYCLASE_2"/>
    <property type="match status" value="1"/>
</dbReference>
<dbReference type="PROSITE" id="PS50011">
    <property type="entry name" value="PROTEIN_KINASE_DOM"/>
    <property type="match status" value="1"/>
</dbReference>
<proteinExistence type="evidence at protein level"/>
<accession>Q6VVW5</accession>
<accession>B1AWI8</accession>
<accession>Q6VVW3</accession>
<accession>Q6VVW4</accession>
<accession>Q8CGA9</accession>
<feature type="signal peptide" evidence="5">
    <location>
        <begin position="1"/>
        <end position="16"/>
    </location>
</feature>
<feature type="chain" id="PRO_0000012365" description="Atrial natriuretic peptide receptor 2">
    <location>
        <begin position="17"/>
        <end position="1047"/>
    </location>
</feature>
<feature type="topological domain" description="Extracellular" evidence="5">
    <location>
        <begin position="17"/>
        <end position="458"/>
    </location>
</feature>
<feature type="transmembrane region" description="Helical" evidence="5">
    <location>
        <begin position="459"/>
        <end position="478"/>
    </location>
</feature>
<feature type="topological domain" description="Cytoplasmic" evidence="5">
    <location>
        <begin position="479"/>
        <end position="1047"/>
    </location>
</feature>
<feature type="domain" description="Protein kinase" evidence="7">
    <location>
        <begin position="513"/>
        <end position="786"/>
    </location>
</feature>
<feature type="domain" description="Guanylate cyclase" evidence="6">
    <location>
        <begin position="861"/>
        <end position="991"/>
    </location>
</feature>
<feature type="modified residue" description="Phosphoserine" evidence="4">
    <location>
        <position position="513"/>
    </location>
</feature>
<feature type="modified residue" description="Phosphothreonine" evidence="4">
    <location>
        <position position="516"/>
    </location>
</feature>
<feature type="modified residue" description="Phosphoserine" evidence="4">
    <location>
        <position position="518"/>
    </location>
</feature>
<feature type="modified residue" description="Phosphoserine" evidence="2">
    <location>
        <position position="522"/>
    </location>
</feature>
<feature type="modified residue" description="Phosphoserine" evidence="4">
    <location>
        <position position="523"/>
    </location>
</feature>
<feature type="modified residue" description="Phosphoserine" evidence="4">
    <location>
        <position position="526"/>
    </location>
</feature>
<feature type="modified residue" description="Phosphothreonine" evidence="4">
    <location>
        <position position="529"/>
    </location>
</feature>
<feature type="glycosylation site" description="N-linked (GlcNAc...) asparagine" evidence="5">
    <location>
        <position position="24"/>
    </location>
</feature>
<feature type="glycosylation site" description="N-linked (GlcNAc...) asparagine" evidence="5">
    <location>
        <position position="35"/>
    </location>
</feature>
<feature type="glycosylation site" description="N-linked (GlcNAc...) asparagine" evidence="5">
    <location>
        <position position="161"/>
    </location>
</feature>
<feature type="glycosylation site" description="N-linked (GlcNAc...) asparagine" evidence="5">
    <location>
        <position position="195"/>
    </location>
</feature>
<feature type="glycosylation site" description="N-linked (GlcNAc...) asparagine" evidence="5">
    <location>
        <position position="244"/>
    </location>
</feature>
<feature type="glycosylation site" description="N-linked (GlcNAc...) asparagine" evidence="5">
    <location>
        <position position="277"/>
    </location>
</feature>
<feature type="glycosylation site" description="N-linked (GlcNAc...) asparagine" evidence="5">
    <location>
        <position position="349"/>
    </location>
</feature>
<feature type="disulfide bond" evidence="1">
    <location>
        <begin position="75"/>
        <end position="101"/>
    </location>
</feature>
<feature type="disulfide bond" description="Interchain" evidence="1">
    <location>
        <position position="439"/>
    </location>
</feature>
<feature type="disulfide bond" description="Interchain" evidence="1">
    <location>
        <position position="448"/>
    </location>
</feature>
<feature type="splice variant" id="VSP_013584" description="In isoform 3." evidence="9">
    <original>PAAHYSGAEKQI</original>
    <variation>VMGERTGRRDWS</variation>
    <location>
        <begin position="407"/>
        <end position="418"/>
    </location>
</feature>
<feature type="splice variant" id="VSP_013585" description="In isoform 3." evidence="9">
    <location>
        <begin position="419"/>
        <end position="1047"/>
    </location>
</feature>
<feature type="splice variant" id="VSP_013583" description="In isoform 2." evidence="9">
    <location>
        <begin position="520"/>
        <end position="544"/>
    </location>
</feature>
<feature type="sequence conflict" description="In Ref. 1; AAQ02634/AAQ02635." evidence="9" ref="1">
    <original>M</original>
    <variation>K</variation>
    <location>
        <position position="990"/>
    </location>
</feature>
<sequence>MALPSLLLVVAALAGGVRPPGARNLTLAVVLPEHNLSYAWAWPRVGPAVALAVEALGRALPVDLRFVSSELDGACSEYLAPLRAVDLKLYHDPDLLLGPGCVYPAASVARFASHWRLPLLTAGAVASGFAAKNEHYRTLVRTGPSAPKLGEFVVTLHGHFNWTARAALLYLDARTDDRPHYFTIEGVFEALQGSNLSVQHQVYAREPGGPEQATHFIRANGRIVYICGPLEMLHEILLQAQRENLTNGDYVFFYLDVFGESLRAGPTRATGRPWQDNRTQEQAQALREAFQTVLVITYREPPNPEYQEFQNRLLIRAREDFGVELAPSLMNLIAGCFYDGILLYAQVLNETIQEGGTREDGLRIVEKMQGRRYHGVTGLVVMDKNNDRETDFVLWAMGDLDSGDFQPAAHYSGAEKQIWWTGRPIPWVKGAPPLDNPPCAFDLDDPSCDKTPLSTLAIVALGTGVTFIMFGVSSFLIFRKLMLEKELASMLWRIRWEELQFGNSDRYHKGAGSRLTLSLRGSSYGSLMTAHGKYQIFANTGHFKGNVVAIKHVNKKRIELTRQVLFELKHMRDVQFNHLTRFIGACIDPPNICIVTEYCPRGSLQDILENDSINLDWMFRYSLINDLVKGMAFLHNSIISSHGSLKSSNCVVDSRFVLKITDYGLASFRSTAEPDDSHALYAKKLWTAPELLSGNPLPTTGMQKADVYSFAIILQEIALRSGPFYLEGLDLSPKEIVQKVRNGQRPYFRPSIDRTQLNEELVLLMERCWAQDPTERPDFGQIKGFIRRFNKEGGTSILDNLLLRMEQYANNLEKLVEERTQAYLEEKRKAEALLYQILPHSVAEQLKRGETVQAEAFDSVTIYFSDIVGFTALSAESTPMQVVTLLNDLYTCFDAIIDNFDVYKVETIGDAYMVVSGLPGRNGQRHAPEIARMALALLDAVSSFRIRHRPHDQLRLRIGVHTGPVCAGVVGLKMPRYCLFGDTVNTASRMESNGQALKIHVSSTTKDALDELGCFQLELRGDVEMKGKGKMRTYWLLGEQKGPPGLL</sequence>